<sequence>MATLGFNTRRIQTPSLPRIPKPSSFTKPIKTHHLFSSETLLKRCRFVSRSLPESSLSITKEQEVANEVEEDDPTSELSYLDPESDADSIKEWELDFCSRPILDSRGKKIWELVVCDASLSLQVTKYFPNNVINSITLKDAIVTITQDLGVPLPEKIRFFRSQMQTIITKACKELAIKAVPSKRCLSLFLWLQERYDTVYTRHPGFQKGSLPLLSLDNPFPMNLPENLFGEKWAFVQLPYSAVREEISDFDEKFVFGASLDLDLLGIEVDENTLIPGLSVATSRAKPLAAWMNGLEVCSIEADSSKGCLILSVGIATRYVYATYKKTPVTTDEAEAWESAKKTSGGLHFLAIQDDLDSDDCVGFWLLIDLPPPPV</sequence>
<proteinExistence type="evidence at transcript level"/>
<accession>Q9SFB3</accession>
<keyword id="KW-0150">Chloroplast</keyword>
<keyword id="KW-0934">Plastid</keyword>
<keyword id="KW-1185">Reference proteome</keyword>
<keyword id="KW-0694">RNA-binding</keyword>
<keyword id="KW-0809">Transit peptide</keyword>
<organism>
    <name type="scientific">Arabidopsis thaliana</name>
    <name type="common">Mouse-ear cress</name>
    <dbReference type="NCBI Taxonomy" id="3702"/>
    <lineage>
        <taxon>Eukaryota</taxon>
        <taxon>Viridiplantae</taxon>
        <taxon>Streptophyta</taxon>
        <taxon>Embryophyta</taxon>
        <taxon>Tracheophyta</taxon>
        <taxon>Spermatophyta</taxon>
        <taxon>Magnoliopsida</taxon>
        <taxon>eudicotyledons</taxon>
        <taxon>Gunneridae</taxon>
        <taxon>Pentapetalae</taxon>
        <taxon>rosids</taxon>
        <taxon>malvids</taxon>
        <taxon>Brassicales</taxon>
        <taxon>Brassicaceae</taxon>
        <taxon>Camelineae</taxon>
        <taxon>Arabidopsis</taxon>
    </lineage>
</organism>
<protein>
    <recommendedName>
        <fullName evidence="7">Protein TAB2 homolog, chloroplastic</fullName>
    </recommendedName>
    <alternativeName>
        <fullName evidence="6">Protein ATAB2</fullName>
    </alternativeName>
</protein>
<name>ATAB2_ARATH</name>
<gene>
    <name evidence="6" type="primary">ATAB2</name>
    <name evidence="8" type="ordered locus">At3g08010</name>
    <name evidence="9" type="ORF">F17A17.35</name>
</gene>
<evidence type="ECO:0000255" key="1"/>
<evidence type="ECO:0000256" key="2">
    <source>
        <dbReference type="SAM" id="MobiDB-lite"/>
    </source>
</evidence>
<evidence type="ECO:0000269" key="3">
    <source>
    </source>
</evidence>
<evidence type="ECO:0000269" key="4">
    <source>
    </source>
</evidence>
<evidence type="ECO:0000269" key="5">
    <source>
    </source>
</evidence>
<evidence type="ECO:0000303" key="6">
    <source>
    </source>
</evidence>
<evidence type="ECO:0000305" key="7"/>
<evidence type="ECO:0000312" key="8">
    <source>
        <dbReference type="Araport" id="AT3G08010"/>
    </source>
</evidence>
<evidence type="ECO:0000312" key="9">
    <source>
        <dbReference type="EMBL" id="AAF21211.1"/>
    </source>
</evidence>
<dbReference type="EMBL" id="AC013483">
    <property type="protein sequence ID" value="AAF21211.1"/>
    <property type="molecule type" value="Genomic_DNA"/>
</dbReference>
<dbReference type="EMBL" id="CP002686">
    <property type="protein sequence ID" value="AEE74630.1"/>
    <property type="molecule type" value="Genomic_DNA"/>
</dbReference>
<dbReference type="EMBL" id="AY072316">
    <property type="protein sequence ID" value="AAL61923.1"/>
    <property type="molecule type" value="mRNA"/>
</dbReference>
<dbReference type="EMBL" id="BT001168">
    <property type="protein sequence ID" value="AAN65055.1"/>
    <property type="molecule type" value="mRNA"/>
</dbReference>
<dbReference type="RefSeq" id="NP_566327.1">
    <property type="nucleotide sequence ID" value="NM_111680.4"/>
</dbReference>
<dbReference type="FunCoup" id="Q9SFB3">
    <property type="interactions" value="1150"/>
</dbReference>
<dbReference type="STRING" id="3702.Q9SFB3"/>
<dbReference type="iPTMnet" id="Q9SFB3"/>
<dbReference type="PaxDb" id="3702-AT3G08010.1"/>
<dbReference type="ProteomicsDB" id="246605"/>
<dbReference type="EnsemblPlants" id="AT3G08010.1">
    <property type="protein sequence ID" value="AT3G08010.1"/>
    <property type="gene ID" value="AT3G08010"/>
</dbReference>
<dbReference type="GeneID" id="819992"/>
<dbReference type="Gramene" id="AT3G08010.1">
    <property type="protein sequence ID" value="AT3G08010.1"/>
    <property type="gene ID" value="AT3G08010"/>
</dbReference>
<dbReference type="KEGG" id="ath:AT3G08010"/>
<dbReference type="Araport" id="AT3G08010"/>
<dbReference type="TAIR" id="AT3G08010">
    <property type="gene designation" value="ATAB2"/>
</dbReference>
<dbReference type="eggNOG" id="ENOG502QVJR">
    <property type="taxonomic scope" value="Eukaryota"/>
</dbReference>
<dbReference type="HOGENOM" id="CLU_058545_1_0_1"/>
<dbReference type="InParanoid" id="Q9SFB3"/>
<dbReference type="OMA" id="FFRRQMN"/>
<dbReference type="OrthoDB" id="3833at2759"/>
<dbReference type="PhylomeDB" id="Q9SFB3"/>
<dbReference type="PRO" id="PR:Q9SFB3"/>
<dbReference type="Proteomes" id="UP000006548">
    <property type="component" value="Chromosome 3"/>
</dbReference>
<dbReference type="ExpressionAtlas" id="Q9SFB3">
    <property type="expression patterns" value="baseline and differential"/>
</dbReference>
<dbReference type="GO" id="GO:0009507">
    <property type="term" value="C:chloroplast"/>
    <property type="evidence" value="ECO:0007005"/>
    <property type="project" value="TAIR"/>
</dbReference>
<dbReference type="GO" id="GO:0003723">
    <property type="term" value="F:RNA binding"/>
    <property type="evidence" value="ECO:0000314"/>
    <property type="project" value="TAIR"/>
</dbReference>
<dbReference type="GO" id="GO:0009658">
    <property type="term" value="P:chloroplast organization"/>
    <property type="evidence" value="ECO:0000315"/>
    <property type="project" value="TAIR"/>
</dbReference>
<dbReference type="GO" id="GO:0009704">
    <property type="term" value="P:de-etiolation"/>
    <property type="evidence" value="ECO:0000270"/>
    <property type="project" value="TAIR"/>
</dbReference>
<dbReference type="GO" id="GO:0048564">
    <property type="term" value="P:photosystem I assembly"/>
    <property type="evidence" value="ECO:0000315"/>
    <property type="project" value="UniProtKB"/>
</dbReference>
<dbReference type="GO" id="GO:0006412">
    <property type="term" value="P:translation"/>
    <property type="evidence" value="ECO:0000315"/>
    <property type="project" value="TAIR"/>
</dbReference>
<dbReference type="InterPro" id="IPR009472">
    <property type="entry name" value="Tab2-like"/>
</dbReference>
<dbReference type="InterPro" id="IPR046761">
    <property type="entry name" value="Tab2-like_C"/>
</dbReference>
<dbReference type="InterPro" id="IPR046760">
    <property type="entry name" value="Tab2-like_N"/>
</dbReference>
<dbReference type="PANTHER" id="PTHR34556">
    <property type="match status" value="1"/>
</dbReference>
<dbReference type="PANTHER" id="PTHR34556:SF2">
    <property type="entry name" value="PROTEIN TAB2 HOMOLOG, CHLOROPLASTIC"/>
    <property type="match status" value="1"/>
</dbReference>
<dbReference type="Pfam" id="PF20429">
    <property type="entry name" value="Tab2-like_C"/>
    <property type="match status" value="1"/>
</dbReference>
<dbReference type="Pfam" id="PF06485">
    <property type="entry name" value="Tab2-like_N"/>
    <property type="match status" value="1"/>
</dbReference>
<feature type="transit peptide" description="Chloroplast" evidence="1">
    <location>
        <begin position="1"/>
        <end position="64"/>
    </location>
</feature>
<feature type="chain" id="PRO_0000439003" description="Protein TAB2 homolog, chloroplastic">
    <location>
        <begin position="65"/>
        <end position="374"/>
    </location>
</feature>
<feature type="region of interest" description="Disordered" evidence="2">
    <location>
        <begin position="58"/>
        <end position="84"/>
    </location>
</feature>
<feature type="compositionally biased region" description="Acidic residues" evidence="2">
    <location>
        <begin position="64"/>
        <end position="74"/>
    </location>
</feature>
<reference key="1">
    <citation type="journal article" date="2000" name="Nature">
        <title>Sequence and analysis of chromosome 3 of the plant Arabidopsis thaliana.</title>
        <authorList>
            <person name="Salanoubat M."/>
            <person name="Lemcke K."/>
            <person name="Rieger M."/>
            <person name="Ansorge W."/>
            <person name="Unseld M."/>
            <person name="Fartmann B."/>
            <person name="Valle G."/>
            <person name="Bloecker H."/>
            <person name="Perez-Alonso M."/>
            <person name="Obermaier B."/>
            <person name="Delseny M."/>
            <person name="Boutry M."/>
            <person name="Grivell L.A."/>
            <person name="Mache R."/>
            <person name="Puigdomenech P."/>
            <person name="De Simone V."/>
            <person name="Choisne N."/>
            <person name="Artiguenave F."/>
            <person name="Robert C."/>
            <person name="Brottier P."/>
            <person name="Wincker P."/>
            <person name="Cattolico L."/>
            <person name="Weissenbach J."/>
            <person name="Saurin W."/>
            <person name="Quetier F."/>
            <person name="Schaefer M."/>
            <person name="Mueller-Auer S."/>
            <person name="Gabel C."/>
            <person name="Fuchs M."/>
            <person name="Benes V."/>
            <person name="Wurmbach E."/>
            <person name="Drzonek H."/>
            <person name="Erfle H."/>
            <person name="Jordan N."/>
            <person name="Bangert S."/>
            <person name="Wiedelmann R."/>
            <person name="Kranz H."/>
            <person name="Voss H."/>
            <person name="Holland R."/>
            <person name="Brandt P."/>
            <person name="Nyakatura G."/>
            <person name="Vezzi A."/>
            <person name="D'Angelo M."/>
            <person name="Pallavicini A."/>
            <person name="Toppo S."/>
            <person name="Simionati B."/>
            <person name="Conrad A."/>
            <person name="Hornischer K."/>
            <person name="Kauer G."/>
            <person name="Loehnert T.-H."/>
            <person name="Nordsiek G."/>
            <person name="Reichelt J."/>
            <person name="Scharfe M."/>
            <person name="Schoen O."/>
            <person name="Bargues M."/>
            <person name="Terol J."/>
            <person name="Climent J."/>
            <person name="Navarro P."/>
            <person name="Collado C."/>
            <person name="Perez-Perez A."/>
            <person name="Ottenwaelder B."/>
            <person name="Duchemin D."/>
            <person name="Cooke R."/>
            <person name="Laudie M."/>
            <person name="Berger-Llauro C."/>
            <person name="Purnelle B."/>
            <person name="Masuy D."/>
            <person name="de Haan M."/>
            <person name="Maarse A.C."/>
            <person name="Alcaraz J.-P."/>
            <person name="Cottet A."/>
            <person name="Casacuberta E."/>
            <person name="Monfort A."/>
            <person name="Argiriou A."/>
            <person name="Flores M."/>
            <person name="Liguori R."/>
            <person name="Vitale D."/>
            <person name="Mannhaupt G."/>
            <person name="Haase D."/>
            <person name="Schoof H."/>
            <person name="Rudd S."/>
            <person name="Zaccaria P."/>
            <person name="Mewes H.-W."/>
            <person name="Mayer K.F.X."/>
            <person name="Kaul S."/>
            <person name="Town C.D."/>
            <person name="Koo H.L."/>
            <person name="Tallon L.J."/>
            <person name="Jenkins J."/>
            <person name="Rooney T."/>
            <person name="Rizzo M."/>
            <person name="Walts A."/>
            <person name="Utterback T."/>
            <person name="Fujii C.Y."/>
            <person name="Shea T.P."/>
            <person name="Creasy T.H."/>
            <person name="Haas B."/>
            <person name="Maiti R."/>
            <person name="Wu D."/>
            <person name="Peterson J."/>
            <person name="Van Aken S."/>
            <person name="Pai G."/>
            <person name="Militscher J."/>
            <person name="Sellers P."/>
            <person name="Gill J.E."/>
            <person name="Feldblyum T.V."/>
            <person name="Preuss D."/>
            <person name="Lin X."/>
            <person name="Nierman W.C."/>
            <person name="Salzberg S.L."/>
            <person name="White O."/>
            <person name="Venter J.C."/>
            <person name="Fraser C.M."/>
            <person name="Kaneko T."/>
            <person name="Nakamura Y."/>
            <person name="Sato S."/>
            <person name="Kato T."/>
            <person name="Asamizu E."/>
            <person name="Sasamoto S."/>
            <person name="Kimura T."/>
            <person name="Idesawa K."/>
            <person name="Kawashima K."/>
            <person name="Kishida Y."/>
            <person name="Kiyokawa C."/>
            <person name="Kohara M."/>
            <person name="Matsumoto M."/>
            <person name="Matsuno A."/>
            <person name="Muraki A."/>
            <person name="Nakayama S."/>
            <person name="Nakazaki N."/>
            <person name="Shinpo S."/>
            <person name="Takeuchi C."/>
            <person name="Wada T."/>
            <person name="Watanabe A."/>
            <person name="Yamada M."/>
            <person name="Yasuda M."/>
            <person name="Tabata S."/>
        </authorList>
    </citation>
    <scope>NUCLEOTIDE SEQUENCE [LARGE SCALE GENOMIC DNA]</scope>
    <source>
        <strain>cv. Columbia</strain>
    </source>
</reference>
<reference key="2">
    <citation type="journal article" date="2017" name="Plant J.">
        <title>Araport11: a complete reannotation of the Arabidopsis thaliana reference genome.</title>
        <authorList>
            <person name="Cheng C.Y."/>
            <person name="Krishnakumar V."/>
            <person name="Chan A.P."/>
            <person name="Thibaud-Nissen F."/>
            <person name="Schobel S."/>
            <person name="Town C.D."/>
        </authorList>
    </citation>
    <scope>GENOME REANNOTATION</scope>
    <source>
        <strain>cv. Columbia</strain>
    </source>
</reference>
<reference key="3">
    <citation type="journal article" date="2003" name="Science">
        <title>Empirical analysis of transcriptional activity in the Arabidopsis genome.</title>
        <authorList>
            <person name="Yamada K."/>
            <person name="Lim J."/>
            <person name="Dale J.M."/>
            <person name="Chen H."/>
            <person name="Shinn P."/>
            <person name="Palm C.J."/>
            <person name="Southwick A.M."/>
            <person name="Wu H.C."/>
            <person name="Kim C.J."/>
            <person name="Nguyen M."/>
            <person name="Pham P.K."/>
            <person name="Cheuk R.F."/>
            <person name="Karlin-Newmann G."/>
            <person name="Liu S.X."/>
            <person name="Lam B."/>
            <person name="Sakano H."/>
            <person name="Wu T."/>
            <person name="Yu G."/>
            <person name="Miranda M."/>
            <person name="Quach H.L."/>
            <person name="Tripp M."/>
            <person name="Chang C.H."/>
            <person name="Lee J.M."/>
            <person name="Toriumi M.J."/>
            <person name="Chan M.M."/>
            <person name="Tang C.C."/>
            <person name="Onodera C.S."/>
            <person name="Deng J.M."/>
            <person name="Akiyama K."/>
            <person name="Ansari Y."/>
            <person name="Arakawa T."/>
            <person name="Banh J."/>
            <person name="Banno F."/>
            <person name="Bowser L."/>
            <person name="Brooks S.Y."/>
            <person name="Carninci P."/>
            <person name="Chao Q."/>
            <person name="Choy N."/>
            <person name="Enju A."/>
            <person name="Goldsmith A.D."/>
            <person name="Gurjal M."/>
            <person name="Hansen N.F."/>
            <person name="Hayashizaki Y."/>
            <person name="Johnson-Hopson C."/>
            <person name="Hsuan V.W."/>
            <person name="Iida K."/>
            <person name="Karnes M."/>
            <person name="Khan S."/>
            <person name="Koesema E."/>
            <person name="Ishida J."/>
            <person name="Jiang P.X."/>
            <person name="Jones T."/>
            <person name="Kawai J."/>
            <person name="Kamiya A."/>
            <person name="Meyers C."/>
            <person name="Nakajima M."/>
            <person name="Narusaka M."/>
            <person name="Seki M."/>
            <person name="Sakurai T."/>
            <person name="Satou M."/>
            <person name="Tamse R."/>
            <person name="Vaysberg M."/>
            <person name="Wallender E.K."/>
            <person name="Wong C."/>
            <person name="Yamamura Y."/>
            <person name="Yuan S."/>
            <person name="Shinozaki K."/>
            <person name="Davis R.W."/>
            <person name="Theologis A."/>
            <person name="Ecker J.R."/>
        </authorList>
    </citation>
    <scope>NUCLEOTIDE SEQUENCE [LARGE SCALE MRNA]</scope>
    <source>
        <strain>cv. Columbia</strain>
    </source>
</reference>
<reference key="4">
    <citation type="journal article" date="2006" name="EMBO J.">
        <title>ATAB2 is a novel factor in the signalling pathway of light-controlled synthesis of photosystem proteins.</title>
        <authorList>
            <person name="Barneche F."/>
            <person name="Winter V."/>
            <person name="Crevecoeur M."/>
            <person name="Rochaix J.D."/>
        </authorList>
    </citation>
    <scope>FUNCTION</scope>
    <scope>SUBCELLULAR LOCATION</scope>
    <scope>DISRUPTION PHENOTYPE</scope>
</reference>
<reference key="5">
    <citation type="journal article" date="2012" name="Plant Signal. Behav.">
        <title>Effect of salt stress on genes encoding translation-associated proteins in Arabidopsis thaliana.</title>
        <authorList>
            <person name="Omidbakhshfard M.A."/>
            <person name="Omranian N."/>
            <person name="Ahmadi F.S."/>
            <person name="Nikoloski Z."/>
            <person name="Mueller-Roeber B."/>
        </authorList>
    </citation>
    <scope>INDUCTION BY SALT STRESS</scope>
</reference>
<reference key="6">
    <citation type="journal article" date="2015" name="Biochim. Biophys. Acta">
        <title>Large-scale genetic analysis of chloroplast biogenesis in maize.</title>
        <authorList>
            <person name="Belcher S."/>
            <person name="Williams-Carrier R."/>
            <person name="Stiffler N."/>
            <person name="Barkan A."/>
        </authorList>
    </citation>
    <scope>FUNCTION</scope>
</reference>
<comment type="function">
    <text evidence="3 5">Nuclear genome-encoded A/U-rich RNA-binding protein involved in the biogenesis of photosystem I (PSI) and II (PSII). Required for the light-controlled accumulation of PSI and PSII during early plant development (PubMed:17139246). Does not seem to be required for the translation of mRNAs of the PSI subunits (PubMed:25725436).</text>
</comment>
<comment type="subcellular location">
    <subcellularLocation>
        <location evidence="3">Plastid</location>
        <location evidence="3">Chloroplast</location>
    </subcellularLocation>
</comment>
<comment type="induction">
    <text evidence="4">Induced by salt stress.</text>
</comment>
<comment type="disruption phenotype">
    <text evidence="3">Albino phenotype and seedling growth arrest at 2 to 4 leaves.</text>
</comment>